<accession>Q80WQ2</accession>
<accession>Q3TAX7</accession>
<accession>Q8C8K8</accession>
<evidence type="ECO:0000250" key="1"/>
<evidence type="ECO:0000250" key="2">
    <source>
        <dbReference type="UniProtKB" id="Q08AM6"/>
    </source>
</evidence>
<evidence type="ECO:0000250" key="3">
    <source>
        <dbReference type="UniProtKB" id="Q80W92"/>
    </source>
</evidence>
<evidence type="ECO:0000256" key="4">
    <source>
        <dbReference type="SAM" id="MobiDB-lite"/>
    </source>
</evidence>
<evidence type="ECO:0000269" key="5">
    <source>
    </source>
</evidence>
<evidence type="ECO:0000269" key="6">
    <source>
    </source>
</evidence>
<evidence type="ECO:0000305" key="7"/>
<protein>
    <recommendedName>
        <fullName>Protein VAC14 homolog</fullName>
    </recommendedName>
</protein>
<reference key="1">
    <citation type="journal article" date="2005" name="Science">
        <title>The transcriptional landscape of the mammalian genome.</title>
        <authorList>
            <person name="Carninci P."/>
            <person name="Kasukawa T."/>
            <person name="Katayama S."/>
            <person name="Gough J."/>
            <person name="Frith M.C."/>
            <person name="Maeda N."/>
            <person name="Oyama R."/>
            <person name="Ravasi T."/>
            <person name="Lenhard B."/>
            <person name="Wells C."/>
            <person name="Kodzius R."/>
            <person name="Shimokawa K."/>
            <person name="Bajic V.B."/>
            <person name="Brenner S.E."/>
            <person name="Batalov S."/>
            <person name="Forrest A.R."/>
            <person name="Zavolan M."/>
            <person name="Davis M.J."/>
            <person name="Wilming L.G."/>
            <person name="Aidinis V."/>
            <person name="Allen J.E."/>
            <person name="Ambesi-Impiombato A."/>
            <person name="Apweiler R."/>
            <person name="Aturaliya R.N."/>
            <person name="Bailey T.L."/>
            <person name="Bansal M."/>
            <person name="Baxter L."/>
            <person name="Beisel K.W."/>
            <person name="Bersano T."/>
            <person name="Bono H."/>
            <person name="Chalk A.M."/>
            <person name="Chiu K.P."/>
            <person name="Choudhary V."/>
            <person name="Christoffels A."/>
            <person name="Clutterbuck D.R."/>
            <person name="Crowe M.L."/>
            <person name="Dalla E."/>
            <person name="Dalrymple B.P."/>
            <person name="de Bono B."/>
            <person name="Della Gatta G."/>
            <person name="di Bernardo D."/>
            <person name="Down T."/>
            <person name="Engstrom P."/>
            <person name="Fagiolini M."/>
            <person name="Faulkner G."/>
            <person name="Fletcher C.F."/>
            <person name="Fukushima T."/>
            <person name="Furuno M."/>
            <person name="Futaki S."/>
            <person name="Gariboldi M."/>
            <person name="Georgii-Hemming P."/>
            <person name="Gingeras T.R."/>
            <person name="Gojobori T."/>
            <person name="Green R.E."/>
            <person name="Gustincich S."/>
            <person name="Harbers M."/>
            <person name="Hayashi Y."/>
            <person name="Hensch T.K."/>
            <person name="Hirokawa N."/>
            <person name="Hill D."/>
            <person name="Huminiecki L."/>
            <person name="Iacono M."/>
            <person name="Ikeo K."/>
            <person name="Iwama A."/>
            <person name="Ishikawa T."/>
            <person name="Jakt M."/>
            <person name="Kanapin A."/>
            <person name="Katoh M."/>
            <person name="Kawasawa Y."/>
            <person name="Kelso J."/>
            <person name="Kitamura H."/>
            <person name="Kitano H."/>
            <person name="Kollias G."/>
            <person name="Krishnan S.P."/>
            <person name="Kruger A."/>
            <person name="Kummerfeld S.K."/>
            <person name="Kurochkin I.V."/>
            <person name="Lareau L.F."/>
            <person name="Lazarevic D."/>
            <person name="Lipovich L."/>
            <person name="Liu J."/>
            <person name="Liuni S."/>
            <person name="McWilliam S."/>
            <person name="Madan Babu M."/>
            <person name="Madera M."/>
            <person name="Marchionni L."/>
            <person name="Matsuda H."/>
            <person name="Matsuzawa S."/>
            <person name="Miki H."/>
            <person name="Mignone F."/>
            <person name="Miyake S."/>
            <person name="Morris K."/>
            <person name="Mottagui-Tabar S."/>
            <person name="Mulder N."/>
            <person name="Nakano N."/>
            <person name="Nakauchi H."/>
            <person name="Ng P."/>
            <person name="Nilsson R."/>
            <person name="Nishiguchi S."/>
            <person name="Nishikawa S."/>
            <person name="Nori F."/>
            <person name="Ohara O."/>
            <person name="Okazaki Y."/>
            <person name="Orlando V."/>
            <person name="Pang K.C."/>
            <person name="Pavan W.J."/>
            <person name="Pavesi G."/>
            <person name="Pesole G."/>
            <person name="Petrovsky N."/>
            <person name="Piazza S."/>
            <person name="Reed J."/>
            <person name="Reid J.F."/>
            <person name="Ring B.Z."/>
            <person name="Ringwald M."/>
            <person name="Rost B."/>
            <person name="Ruan Y."/>
            <person name="Salzberg S.L."/>
            <person name="Sandelin A."/>
            <person name="Schneider C."/>
            <person name="Schoenbach C."/>
            <person name="Sekiguchi K."/>
            <person name="Semple C.A."/>
            <person name="Seno S."/>
            <person name="Sessa L."/>
            <person name="Sheng Y."/>
            <person name="Shibata Y."/>
            <person name="Shimada H."/>
            <person name="Shimada K."/>
            <person name="Silva D."/>
            <person name="Sinclair B."/>
            <person name="Sperling S."/>
            <person name="Stupka E."/>
            <person name="Sugiura K."/>
            <person name="Sultana R."/>
            <person name="Takenaka Y."/>
            <person name="Taki K."/>
            <person name="Tammoja K."/>
            <person name="Tan S.L."/>
            <person name="Tang S."/>
            <person name="Taylor M.S."/>
            <person name="Tegner J."/>
            <person name="Teichmann S.A."/>
            <person name="Ueda H.R."/>
            <person name="van Nimwegen E."/>
            <person name="Verardo R."/>
            <person name="Wei C.L."/>
            <person name="Yagi K."/>
            <person name="Yamanishi H."/>
            <person name="Zabarovsky E."/>
            <person name="Zhu S."/>
            <person name="Zimmer A."/>
            <person name="Hide W."/>
            <person name="Bult C."/>
            <person name="Grimmond S.M."/>
            <person name="Teasdale R.D."/>
            <person name="Liu E.T."/>
            <person name="Brusic V."/>
            <person name="Quackenbush J."/>
            <person name="Wahlestedt C."/>
            <person name="Mattick J.S."/>
            <person name="Hume D.A."/>
            <person name="Kai C."/>
            <person name="Sasaki D."/>
            <person name="Tomaru Y."/>
            <person name="Fukuda S."/>
            <person name="Kanamori-Katayama M."/>
            <person name="Suzuki M."/>
            <person name="Aoki J."/>
            <person name="Arakawa T."/>
            <person name="Iida J."/>
            <person name="Imamura K."/>
            <person name="Itoh M."/>
            <person name="Kato T."/>
            <person name="Kawaji H."/>
            <person name="Kawagashira N."/>
            <person name="Kawashima T."/>
            <person name="Kojima M."/>
            <person name="Kondo S."/>
            <person name="Konno H."/>
            <person name="Nakano K."/>
            <person name="Ninomiya N."/>
            <person name="Nishio T."/>
            <person name="Okada M."/>
            <person name="Plessy C."/>
            <person name="Shibata K."/>
            <person name="Shiraki T."/>
            <person name="Suzuki S."/>
            <person name="Tagami M."/>
            <person name="Waki K."/>
            <person name="Watahiki A."/>
            <person name="Okamura-Oho Y."/>
            <person name="Suzuki H."/>
            <person name="Kawai J."/>
            <person name="Hayashizaki Y."/>
        </authorList>
    </citation>
    <scope>NUCLEOTIDE SEQUENCE [LARGE SCALE MRNA]</scope>
    <source>
        <strain>C57BL/6J</strain>
        <tissue>Medulla oblongata</tissue>
    </source>
</reference>
<reference key="2">
    <citation type="journal article" date="2004" name="Genome Res.">
        <title>The status, quality, and expansion of the NIH full-length cDNA project: the Mammalian Gene Collection (MGC).</title>
        <authorList>
            <consortium name="The MGC Project Team"/>
        </authorList>
    </citation>
    <scope>NUCLEOTIDE SEQUENCE [LARGE SCALE MRNA]</scope>
    <source>
        <tissue>Limb</tissue>
    </source>
</reference>
<reference key="3">
    <citation type="journal article" date="2007" name="Proc. Natl. Acad. Sci. U.S.A.">
        <title>Loss of Vac14, a regulator of the signaling lipid phosphatidylinositol 3,5-bisphosphate, results in neurodegeneration in mice.</title>
        <authorList>
            <person name="Zhang Y."/>
            <person name="Zolov S.N."/>
            <person name="Chow C.Y."/>
            <person name="Slutsky S.G."/>
            <person name="Richardson S.C."/>
            <person name="Piper R.C."/>
            <person name="Yang B."/>
            <person name="Nau J.J."/>
            <person name="Westrick R.J."/>
            <person name="Morrison S.J."/>
            <person name="Meisler M.H."/>
            <person name="Weisman L.S."/>
        </authorList>
    </citation>
    <scope>FUNCTION</scope>
    <scope>DISRUPTION PHENOTYPE</scope>
    <scope>TISSUE SPECIFICITY</scope>
</reference>
<reference key="4">
    <citation type="journal article" date="2008" name="EMBO J.">
        <title>VAC14 nucleates a protein complex essential for the acute interconversion of PI3P and PI(3,5)P(2) in yeast and mouse.</title>
        <authorList>
            <person name="Jin N."/>
            <person name="Chow C.Y."/>
            <person name="Liu L."/>
            <person name="Zolov S.N."/>
            <person name="Bronson R."/>
            <person name="Davisson M."/>
            <person name="Petersen J.L."/>
            <person name="Zhang Y."/>
            <person name="Park S."/>
            <person name="Duex J.E."/>
            <person name="Goldowitz D."/>
            <person name="Meisler M.H."/>
            <person name="Weisman L.S."/>
        </authorList>
    </citation>
    <scope>IDENTIFICATION IN THE PI(3,5)P2 REGULATORY COMPLEX</scope>
    <scope>FUNCTION</scope>
    <scope>SUBCELLULAR LOCATION</scope>
    <scope>VARIANT INGLS ARG-156</scope>
</reference>
<reference key="5">
    <citation type="journal article" date="2010" name="Cell">
        <title>A tissue-specific atlas of mouse protein phosphorylation and expression.</title>
        <authorList>
            <person name="Huttlin E.L."/>
            <person name="Jedrychowski M.P."/>
            <person name="Elias J.E."/>
            <person name="Goswami T."/>
            <person name="Rad R."/>
            <person name="Beausoleil S.A."/>
            <person name="Villen J."/>
            <person name="Haas W."/>
            <person name="Sowa M.E."/>
            <person name="Gygi S.P."/>
        </authorList>
    </citation>
    <scope>IDENTIFICATION BY MASS SPECTROMETRY [LARGE SCALE ANALYSIS]</scope>
    <source>
        <tissue>Brain</tissue>
        <tissue>Brown adipose tissue</tissue>
        <tissue>Heart</tissue>
        <tissue>Kidney</tissue>
        <tissue>Liver</tissue>
        <tissue>Lung</tissue>
        <tissue>Pancreas</tissue>
        <tissue>Spleen</tissue>
        <tissue>Testis</tissue>
    </source>
</reference>
<sequence length="782" mass="88048">MNPEKDFAPLTPNIVRALNDKLYEKRKVAALEIEKLVRDFVAQNNTMQIKHVIQTLSQEFALSQHPHSRKGGLIGLAACSIALGKDSGLYLKELIEPVLTCFNDADSRLRYYACEALYNIVKVARGAVLPHFNVLFDGLSKLAADPDPNVKSGSELLDRLLKDIVTESSKFDLVSFIPLLRERIYSNNQYARQFIISWILVLVSVPDINLLDYLPEILDGLFQILGDNGKEIRKMCEVVLGEFLKEIKKNPSSVKFAEMANILVIHCQTTDDLIQLTAMCWMREFIQLAGRVMLPYSSGILTAVLPCLAYDDRKKSIKEVANVCNQSLMKLVTPEDDEPDEPKSVAQKQTEPNPEDSLPKQEGTASGGPGSCDSSFGSGINVFTSANTDRAPVTLHLDGIVQVLNCHLSDTTIGMMTRIAVLKWLYHLYIKTPRKMFRHTDSLFPILLQTLSDESDEVVLKDLEVLAEIASSPAGQTDDPGAPDGPDLRVNHSELQVPTSGRANLLNPPSTKGLEGSPSTPTMNSYFYKFMINLLQTFSSERKLLEARGPFIIRQLCLLLNAENIFHSMADILLREEDLKFASTMVHTLNTILLTSTELFQLRNQLKDLQTPESQNLFCCLYRSWCHNPVTTVSLCFLTQNYRHAYDLIQKFGDLEVTVDFLTEVDKLVQLIECPIFTYLRLQLLDVKNNPYLIKALYGLLMLLPQSSAFQLLSHRLQCVPNPELLQTEDCLKAAPKSQKGDSPSIDYTELLQHFEKVQKQHLEVRHQRSGRGDHLDRRVIL</sequence>
<feature type="chain" id="PRO_0000300486" description="Protein VAC14 homolog">
    <location>
        <begin position="1"/>
        <end position="782"/>
    </location>
</feature>
<feature type="repeat" description="HEAT 1">
    <location>
        <begin position="5"/>
        <end position="42"/>
    </location>
</feature>
<feature type="repeat" description="HEAT 2">
    <location>
        <begin position="89"/>
        <end position="126"/>
    </location>
</feature>
<feature type="repeat" description="HEAT 3">
    <location>
        <begin position="171"/>
        <end position="208"/>
    </location>
</feature>
<feature type="repeat" description="HEAT 4">
    <location>
        <begin position="212"/>
        <end position="249"/>
    </location>
</feature>
<feature type="repeat" description="HEAT 5">
    <location>
        <begin position="438"/>
        <end position="475"/>
    </location>
</feature>
<feature type="repeat" description="HEAT 6">
    <location>
        <begin position="560"/>
        <end position="598"/>
    </location>
</feature>
<feature type="region of interest" description="Disordered" evidence="4">
    <location>
        <begin position="331"/>
        <end position="371"/>
    </location>
</feature>
<feature type="region of interest" description="Disordered" evidence="4">
    <location>
        <begin position="471"/>
        <end position="519"/>
    </location>
</feature>
<feature type="region of interest" description="Mediates interaction with the PDZ domain of NOS1" evidence="1">
    <location>
        <begin position="773"/>
        <end position="777"/>
    </location>
</feature>
<feature type="compositionally biased region" description="Polar residues" evidence="4">
    <location>
        <begin position="493"/>
        <end position="510"/>
    </location>
</feature>
<feature type="modified residue" description="N-acetylmethionine" evidence="2">
    <location>
        <position position="1"/>
    </location>
</feature>
<feature type="modified residue" description="Phosphothreonine" evidence="2">
    <location>
        <position position="11"/>
    </location>
</feature>
<feature type="modified residue" description="Phosphothreonine" evidence="2">
    <location>
        <position position="499"/>
    </location>
</feature>
<feature type="modified residue" description="Phosphoserine" evidence="2">
    <location>
        <position position="517"/>
    </location>
</feature>
<feature type="modified residue" description="Phosphoserine" evidence="2">
    <location>
        <position position="743"/>
    </location>
</feature>
<feature type="sequence variant" description="In ingls; loss of interaction with Pikfyve but not with Fig4." evidence="6">
    <original>L</original>
    <variation>R</variation>
    <location>
        <position position="156"/>
    </location>
</feature>
<feature type="sequence conflict" description="In Ref. 1; BAC32886." evidence="7" ref="1">
    <original>V</original>
    <variation>A</variation>
    <location>
        <position position="41"/>
    </location>
</feature>
<feature type="sequence conflict" description="In Ref. 1; BAE42537." evidence="7" ref="1">
    <original>S</original>
    <variation>R</variation>
    <location>
        <position position="614"/>
    </location>
</feature>
<feature type="sequence conflict" description="In Ref. 1; BAE42537." evidence="7" ref="1">
    <original>V</original>
    <variation>A</variation>
    <location>
        <position position="758"/>
    </location>
</feature>
<name>VAC14_MOUSE</name>
<comment type="function">
    <text evidence="2 5 6">Scaffold protein component of the PI(3,5)P2 regulatory complex which regulates both the synthesis and turnover of phosphatidylinositol 3,5-bisphosphate (PtdIns(3,5)P2). Pentamerizes into a star-shaped structure and nucleates the assembly of the complex. The pentamer binds a single copy each of PIKFYVE and FIG4 and coordinates both PIKfyve kinase activity and FIG4 phosphatase activity, being required to maintain normal levels of phosphatidylinositol 3-phosphate (PtdIns(3)P) and phosphatidylinositol 5-phosphate (PtdIns(5)P). Plays a role in the biogenesis of endosome carrier vesicles (ECV) / multivesicular bodies (MVB) transport intermediates from early endosomes.</text>
</comment>
<comment type="subunit">
    <text evidence="2">Forms pentamers. Component of the PI(3,5)P2 regulatory complex/PAS complex, at least composed of PIKFYVE, FIG4 and VAC14. VAC14 nucleates the assembly of the complex and serves as a scaffold by pentamerizing into a star-shaped structure, which can bind a single copy each of PIKFYVE and FIG4 and coordinates their activities. Interacts with NOS1.</text>
</comment>
<comment type="subcellular location">
    <subcellularLocation>
        <location evidence="6">Endosome membrane</location>
    </subcellularLocation>
    <subcellularLocation>
        <location evidence="3">Microsome membrane</location>
    </subcellularLocation>
    <text evidence="2">Mainly associated with membranes of the late endocytic pathway.</text>
</comment>
<comment type="tissue specificity">
    <text evidence="5">Ubiquitous.</text>
</comment>
<comment type="domain">
    <text evidence="2">The C-terminal domain (residues 523-782) mediates pentameric interactions and is necessary for the formation and maintenance of the PI(3,5)P2 regulatory complex.</text>
</comment>
<comment type="disease">
    <text evidence="6">Defects in Vac14 are the cause of the infantile gliosis phenotype (ingls). Mice exhibit reduced body size and diluted pigmentation that can be recognized as early as postnatal day 3 (P3). By P14, the mice exhibit a tremor and impaired motor function. Maximal survival of the mice is for 3 weeks. Small areas with the appearance of spongiform degeneration are visible in several brain regions, including the thalamus, brain stem and cerebellar nucleus.</text>
</comment>
<comment type="disruption phenotype">
    <text evidence="5">Mice die perinatally and exhibit profound degeneration in certain regions of the central and peripheral nervous systems. Selected regions in the brain are affected, especially the medulla, the pons and the midbrain and increased cell death occurs in these areas. Affected neurons contain large vacuoles.</text>
</comment>
<comment type="similarity">
    <text evidence="7">Belongs to the VAC14 family.</text>
</comment>
<organism>
    <name type="scientific">Mus musculus</name>
    <name type="common">Mouse</name>
    <dbReference type="NCBI Taxonomy" id="10090"/>
    <lineage>
        <taxon>Eukaryota</taxon>
        <taxon>Metazoa</taxon>
        <taxon>Chordata</taxon>
        <taxon>Craniata</taxon>
        <taxon>Vertebrata</taxon>
        <taxon>Euteleostomi</taxon>
        <taxon>Mammalia</taxon>
        <taxon>Eutheria</taxon>
        <taxon>Euarchontoglires</taxon>
        <taxon>Glires</taxon>
        <taxon>Rodentia</taxon>
        <taxon>Myomorpha</taxon>
        <taxon>Muroidea</taxon>
        <taxon>Muridae</taxon>
        <taxon>Murinae</taxon>
        <taxon>Mus</taxon>
        <taxon>Mus</taxon>
    </lineage>
</organism>
<dbReference type="EMBL" id="AK046826">
    <property type="protein sequence ID" value="BAC32886.1"/>
    <property type="molecule type" value="mRNA"/>
</dbReference>
<dbReference type="EMBL" id="AK171577">
    <property type="protein sequence ID" value="BAE42537.1"/>
    <property type="molecule type" value="mRNA"/>
</dbReference>
<dbReference type="EMBL" id="BC052199">
    <property type="protein sequence ID" value="AAH52199.1"/>
    <property type="molecule type" value="mRNA"/>
</dbReference>
<dbReference type="CCDS" id="CCDS22663.1"/>
<dbReference type="RefSeq" id="NP_666328.2">
    <property type="nucleotide sequence ID" value="NM_146216.2"/>
</dbReference>
<dbReference type="BioGRID" id="231569">
    <property type="interactions" value="6"/>
</dbReference>
<dbReference type="FunCoup" id="Q80WQ2">
    <property type="interactions" value="3866"/>
</dbReference>
<dbReference type="IntAct" id="Q80WQ2">
    <property type="interactions" value="6"/>
</dbReference>
<dbReference type="MINT" id="Q80WQ2"/>
<dbReference type="STRING" id="10090.ENSMUSP00000034190"/>
<dbReference type="ChEMBL" id="CHEMBL2176841"/>
<dbReference type="GlyGen" id="Q80WQ2">
    <property type="glycosylation" value="2 sites, 1 O-linked glycan (2 sites)"/>
</dbReference>
<dbReference type="iPTMnet" id="Q80WQ2"/>
<dbReference type="PhosphoSitePlus" id="Q80WQ2"/>
<dbReference type="SwissPalm" id="Q80WQ2"/>
<dbReference type="jPOST" id="Q80WQ2"/>
<dbReference type="PaxDb" id="10090-ENSMUSP00000034190"/>
<dbReference type="PeptideAtlas" id="Q80WQ2"/>
<dbReference type="ProteomicsDB" id="300208"/>
<dbReference type="Pumba" id="Q80WQ2"/>
<dbReference type="Antibodypedia" id="16467">
    <property type="antibodies" value="96 antibodies from 22 providers"/>
</dbReference>
<dbReference type="DNASU" id="234729"/>
<dbReference type="Ensembl" id="ENSMUST00000034190.11">
    <property type="protein sequence ID" value="ENSMUSP00000034190.10"/>
    <property type="gene ID" value="ENSMUSG00000010936.12"/>
</dbReference>
<dbReference type="GeneID" id="234729"/>
<dbReference type="KEGG" id="mmu:234729"/>
<dbReference type="UCSC" id="uc009nkv.2">
    <property type="organism name" value="mouse"/>
</dbReference>
<dbReference type="AGR" id="MGI:2157980"/>
<dbReference type="CTD" id="55697"/>
<dbReference type="MGI" id="MGI:2157980">
    <property type="gene designation" value="Vac14"/>
</dbReference>
<dbReference type="VEuPathDB" id="HostDB:ENSMUSG00000010936"/>
<dbReference type="eggNOG" id="KOG0212">
    <property type="taxonomic scope" value="Eukaryota"/>
</dbReference>
<dbReference type="GeneTree" id="ENSGT00390000008385"/>
<dbReference type="HOGENOM" id="CLU_007740_1_0_1"/>
<dbReference type="InParanoid" id="Q80WQ2"/>
<dbReference type="OMA" id="QCYQHVS"/>
<dbReference type="OrthoDB" id="5574975at2759"/>
<dbReference type="PhylomeDB" id="Q80WQ2"/>
<dbReference type="TreeFam" id="TF343690"/>
<dbReference type="Reactome" id="R-MMU-1660514">
    <property type="pathway name" value="Synthesis of PIPs at the Golgi membrane"/>
</dbReference>
<dbReference type="Reactome" id="R-MMU-1660516">
    <property type="pathway name" value="Synthesis of PIPs at the early endosome membrane"/>
</dbReference>
<dbReference type="Reactome" id="R-MMU-1660517">
    <property type="pathway name" value="Synthesis of PIPs at the late endosome membrane"/>
</dbReference>
<dbReference type="BioGRID-ORCS" id="234729">
    <property type="hits" value="15 hits in 81 CRISPR screens"/>
</dbReference>
<dbReference type="PRO" id="PR:Q80WQ2"/>
<dbReference type="Proteomes" id="UP000000589">
    <property type="component" value="Chromosome 8"/>
</dbReference>
<dbReference type="RNAct" id="Q80WQ2">
    <property type="molecule type" value="protein"/>
</dbReference>
<dbReference type="Bgee" id="ENSMUSG00000010936">
    <property type="expression patterns" value="Expressed in animal zygote and 222 other cell types or tissues"/>
</dbReference>
<dbReference type="ExpressionAtlas" id="Q80WQ2">
    <property type="expression patterns" value="baseline and differential"/>
</dbReference>
<dbReference type="GO" id="GO:0005829">
    <property type="term" value="C:cytosol"/>
    <property type="evidence" value="ECO:0007669"/>
    <property type="project" value="Ensembl"/>
</dbReference>
<dbReference type="GO" id="GO:0005783">
    <property type="term" value="C:endoplasmic reticulum"/>
    <property type="evidence" value="ECO:0007669"/>
    <property type="project" value="UniProtKB-KW"/>
</dbReference>
<dbReference type="GO" id="GO:0010008">
    <property type="term" value="C:endosome membrane"/>
    <property type="evidence" value="ECO:0007669"/>
    <property type="project" value="UniProtKB-SubCell"/>
</dbReference>
<dbReference type="GO" id="GO:0070772">
    <property type="term" value="C:PAS complex"/>
    <property type="evidence" value="ECO:0007669"/>
    <property type="project" value="InterPro"/>
</dbReference>
<dbReference type="GO" id="GO:0098830">
    <property type="term" value="C:presynaptic endosome"/>
    <property type="evidence" value="ECO:0000314"/>
    <property type="project" value="SynGO"/>
</dbReference>
<dbReference type="GO" id="GO:0005774">
    <property type="term" value="C:vacuolar membrane"/>
    <property type="evidence" value="ECO:0000247"/>
    <property type="project" value="MGI"/>
</dbReference>
<dbReference type="GO" id="GO:0042802">
    <property type="term" value="F:identical protein binding"/>
    <property type="evidence" value="ECO:0007669"/>
    <property type="project" value="Ensembl"/>
</dbReference>
<dbReference type="GO" id="GO:0019209">
    <property type="term" value="F:kinase activator activity"/>
    <property type="evidence" value="ECO:0000247"/>
    <property type="project" value="MGI"/>
</dbReference>
<dbReference type="GO" id="GO:0006661">
    <property type="term" value="P:phosphatidylinositol biosynthetic process"/>
    <property type="evidence" value="ECO:0007669"/>
    <property type="project" value="InterPro"/>
</dbReference>
<dbReference type="GO" id="GO:0099149">
    <property type="term" value="P:regulation of postsynaptic neurotransmitter receptor internalization"/>
    <property type="evidence" value="ECO:0000314"/>
    <property type="project" value="SynGO"/>
</dbReference>
<dbReference type="GO" id="GO:0006970">
    <property type="term" value="P:response to osmotic stress"/>
    <property type="evidence" value="ECO:0000247"/>
    <property type="project" value="MGI"/>
</dbReference>
<dbReference type="FunFam" id="1.25.10.10:FF:000631">
    <property type="entry name" value="Vac14, PIKFYVE complex component"/>
    <property type="match status" value="1"/>
</dbReference>
<dbReference type="Gene3D" id="1.25.10.10">
    <property type="entry name" value="Leucine-rich Repeat Variant"/>
    <property type="match status" value="2"/>
</dbReference>
<dbReference type="InterPro" id="IPR011989">
    <property type="entry name" value="ARM-like"/>
</dbReference>
<dbReference type="InterPro" id="IPR016024">
    <property type="entry name" value="ARM-type_fold"/>
</dbReference>
<dbReference type="InterPro" id="IPR026825">
    <property type="entry name" value="Vac14"/>
</dbReference>
<dbReference type="InterPro" id="IPR021841">
    <property type="entry name" value="VAC14_Fig4p-bd"/>
</dbReference>
<dbReference type="PANTHER" id="PTHR16023:SF0">
    <property type="entry name" value="PROTEIN VAC14 HOMOLOG"/>
    <property type="match status" value="1"/>
</dbReference>
<dbReference type="PANTHER" id="PTHR16023">
    <property type="entry name" value="TAX1 BINDING PROTEIN-RELATED"/>
    <property type="match status" value="1"/>
</dbReference>
<dbReference type="Pfam" id="PF12755">
    <property type="entry name" value="Vac14_Fab1_bd"/>
    <property type="match status" value="1"/>
</dbReference>
<dbReference type="Pfam" id="PF11916">
    <property type="entry name" value="Vac14_Fig4_bd"/>
    <property type="match status" value="1"/>
</dbReference>
<dbReference type="SUPFAM" id="SSF48371">
    <property type="entry name" value="ARM repeat"/>
    <property type="match status" value="1"/>
</dbReference>
<gene>
    <name type="primary">Vac14</name>
    <name type="synonym">D8Wsu151e</name>
</gene>
<proteinExistence type="evidence at protein level"/>
<keyword id="KW-0007">Acetylation</keyword>
<keyword id="KW-0225">Disease variant</keyword>
<keyword id="KW-0256">Endoplasmic reticulum</keyword>
<keyword id="KW-0967">Endosome</keyword>
<keyword id="KW-0472">Membrane</keyword>
<keyword id="KW-0492">Microsome</keyword>
<keyword id="KW-0523">Neurodegeneration</keyword>
<keyword id="KW-0622">Neuropathy</keyword>
<keyword id="KW-0597">Phosphoprotein</keyword>
<keyword id="KW-1185">Reference proteome</keyword>
<keyword id="KW-0677">Repeat</keyword>